<protein>
    <recommendedName>
        <fullName evidence="2">Exoribonuclease 2</fullName>
        <ecNumber evidence="2">3.1.13.1</ecNumber>
    </recommendedName>
    <alternativeName>
        <fullName evidence="2">Exoribonuclease II</fullName>
        <shortName evidence="2">RNase II</shortName>
        <shortName evidence="2">Ribonuclease II</shortName>
    </alternativeName>
</protein>
<evidence type="ECO:0000255" key="1"/>
<evidence type="ECO:0000255" key="2">
    <source>
        <dbReference type="HAMAP-Rule" id="MF_01036"/>
    </source>
</evidence>
<comment type="function">
    <text evidence="2">Involved in mRNA degradation. Hydrolyzes single-stranded polyribonucleotides processively in the 3' to 5' direction.</text>
</comment>
<comment type="catalytic activity">
    <reaction evidence="2">
        <text>Exonucleolytic cleavage in the 3'- to 5'-direction to yield nucleoside 5'-phosphates.</text>
        <dbReference type="EC" id="3.1.13.1"/>
    </reaction>
</comment>
<comment type="subcellular location">
    <subcellularLocation>
        <location evidence="2">Cytoplasm</location>
    </subcellularLocation>
</comment>
<comment type="similarity">
    <text evidence="2">Belongs to the RNR ribonuclease family. RNase II subfamily.</text>
</comment>
<proteinExistence type="inferred from homology"/>
<accession>B8D959</accession>
<reference key="1">
    <citation type="journal article" date="2009" name="Science">
        <title>The dynamics and time scale of ongoing genomic erosion in symbiotic bacteria.</title>
        <authorList>
            <person name="Moran N.A."/>
            <person name="McLaughlin H.J."/>
            <person name="Sorek R."/>
        </authorList>
    </citation>
    <scope>NUCLEOTIDE SEQUENCE [LARGE SCALE GENOMIC DNA]</scope>
    <source>
        <strain>5A</strain>
    </source>
</reference>
<keyword id="KW-0963">Cytoplasm</keyword>
<keyword id="KW-0269">Exonuclease</keyword>
<keyword id="KW-0378">Hydrolase</keyword>
<keyword id="KW-0540">Nuclease</keyword>
<keyword id="KW-0694">RNA-binding</keyword>
<organism>
    <name type="scientific">Buchnera aphidicola subsp. Acyrthosiphon pisum (strain 5A)</name>
    <dbReference type="NCBI Taxonomy" id="563178"/>
    <lineage>
        <taxon>Bacteria</taxon>
        <taxon>Pseudomonadati</taxon>
        <taxon>Pseudomonadota</taxon>
        <taxon>Gammaproteobacteria</taxon>
        <taxon>Enterobacterales</taxon>
        <taxon>Erwiniaceae</taxon>
        <taxon>Buchnera</taxon>
    </lineage>
</organism>
<gene>
    <name evidence="2" type="primary">rnb</name>
    <name type="ordered locus">BUAP5A_261</name>
</gene>
<dbReference type="EC" id="3.1.13.1" evidence="2"/>
<dbReference type="EMBL" id="CP001161">
    <property type="protein sequence ID" value="ACL30630.1"/>
    <property type="molecule type" value="Genomic_DNA"/>
</dbReference>
<dbReference type="RefSeq" id="WP_009874220.1">
    <property type="nucleotide sequence ID" value="NC_011833.1"/>
</dbReference>
<dbReference type="SMR" id="B8D959"/>
<dbReference type="KEGG" id="bap:BUAP5A_261"/>
<dbReference type="HOGENOM" id="CLU_002333_7_3_6"/>
<dbReference type="OrthoDB" id="9764149at2"/>
<dbReference type="Proteomes" id="UP000006904">
    <property type="component" value="Chromosome"/>
</dbReference>
<dbReference type="GO" id="GO:0005829">
    <property type="term" value="C:cytosol"/>
    <property type="evidence" value="ECO:0007669"/>
    <property type="project" value="UniProtKB-ARBA"/>
</dbReference>
<dbReference type="GO" id="GO:0008859">
    <property type="term" value="F:exoribonuclease II activity"/>
    <property type="evidence" value="ECO:0007669"/>
    <property type="project" value="UniProtKB-UniRule"/>
</dbReference>
<dbReference type="GO" id="GO:0003723">
    <property type="term" value="F:RNA binding"/>
    <property type="evidence" value="ECO:0007669"/>
    <property type="project" value="UniProtKB-KW"/>
</dbReference>
<dbReference type="GO" id="GO:0006402">
    <property type="term" value="P:mRNA catabolic process"/>
    <property type="evidence" value="ECO:0007669"/>
    <property type="project" value="UniProtKB-UniRule"/>
</dbReference>
<dbReference type="Gene3D" id="2.40.50.640">
    <property type="match status" value="1"/>
</dbReference>
<dbReference type="Gene3D" id="2.40.50.140">
    <property type="entry name" value="Nucleic acid-binding proteins"/>
    <property type="match status" value="2"/>
</dbReference>
<dbReference type="HAMAP" id="MF_01036">
    <property type="entry name" value="RNase_II"/>
    <property type="match status" value="1"/>
</dbReference>
<dbReference type="InterPro" id="IPR011129">
    <property type="entry name" value="CSD"/>
</dbReference>
<dbReference type="InterPro" id="IPR012340">
    <property type="entry name" value="NA-bd_OB-fold"/>
</dbReference>
<dbReference type="InterPro" id="IPR013223">
    <property type="entry name" value="RNase_B_OB_dom"/>
</dbReference>
<dbReference type="InterPro" id="IPR011804">
    <property type="entry name" value="RNase_II"/>
</dbReference>
<dbReference type="InterPro" id="IPR001900">
    <property type="entry name" value="RNase_II/R"/>
</dbReference>
<dbReference type="InterPro" id="IPR022966">
    <property type="entry name" value="RNase_II/R_CS"/>
</dbReference>
<dbReference type="InterPro" id="IPR004476">
    <property type="entry name" value="RNase_II/RNase_R"/>
</dbReference>
<dbReference type="InterPro" id="IPR050180">
    <property type="entry name" value="RNR_Ribonuclease"/>
</dbReference>
<dbReference type="NCBIfam" id="TIGR00358">
    <property type="entry name" value="3_prime_RNase"/>
    <property type="match status" value="1"/>
</dbReference>
<dbReference type="NCBIfam" id="NF003455">
    <property type="entry name" value="PRK05054.1"/>
    <property type="match status" value="1"/>
</dbReference>
<dbReference type="NCBIfam" id="TIGR02062">
    <property type="entry name" value="RNase_B"/>
    <property type="match status" value="1"/>
</dbReference>
<dbReference type="PANTHER" id="PTHR23355:SF37">
    <property type="entry name" value="EXORIBONUCLEASE 2"/>
    <property type="match status" value="1"/>
</dbReference>
<dbReference type="PANTHER" id="PTHR23355">
    <property type="entry name" value="RIBONUCLEASE"/>
    <property type="match status" value="1"/>
</dbReference>
<dbReference type="Pfam" id="PF08206">
    <property type="entry name" value="OB_RNB"/>
    <property type="match status" value="1"/>
</dbReference>
<dbReference type="Pfam" id="PF00773">
    <property type="entry name" value="RNB"/>
    <property type="match status" value="1"/>
</dbReference>
<dbReference type="SMART" id="SM00357">
    <property type="entry name" value="CSP"/>
    <property type="match status" value="1"/>
</dbReference>
<dbReference type="SMART" id="SM00955">
    <property type="entry name" value="RNB"/>
    <property type="match status" value="1"/>
</dbReference>
<dbReference type="SUPFAM" id="SSF50249">
    <property type="entry name" value="Nucleic acid-binding proteins"/>
    <property type="match status" value="4"/>
</dbReference>
<dbReference type="PROSITE" id="PS01175">
    <property type="entry name" value="RIBONUCLEASE_II"/>
    <property type="match status" value="1"/>
</dbReference>
<name>RNB_BUCA5</name>
<feature type="chain" id="PRO_1000149454" description="Exoribonuclease 2">
    <location>
        <begin position="1"/>
        <end position="649"/>
    </location>
</feature>
<feature type="domain" description="RNB" evidence="1">
    <location>
        <begin position="190"/>
        <end position="517"/>
    </location>
</feature>
<feature type="domain" description="S1 motif" evidence="2">
    <location>
        <begin position="562"/>
        <end position="644"/>
    </location>
</feature>
<sequence length="649" mass="75132">MFQNNPLLTQLKKNLHAKSPRVEGIVKSTERGFGFLEVDPQKSYFIPPKNMKNVMHGDKIIALLTTEKDREIVEPEKLIEPFLNRFVGKIEKKDNRLFIVPDYPFLKDLITCQPNKNCINIFQNGDWAVAQLKKHKLKGDHLFYAELTEKITQEDDPLIPWWVTLARHDLDRKEPLAEEDDLILKESDNRKDLTDLDFITIDNTNTKDIDDALFVSEKNNGDISLIVAIADPTAYIKHGSKLDVIASKRIFTNYLPGFNIPMLPRNLSEDICSLNPNKRRPVLACHITVLKNGNISNKIEFFLAWIKSKSKLSYDHVSDWIEKIGSWIPPTKSIANQILILHRLCLLRIKWRKKNAVLFKDSIEYRFHVSEHGKIIDVLIEKRRIAHKIIEESMIVANISAANFLSKNIGFGIYNVHSGFDLVNAENAVSFLRSYNLNFTVKEITTLKGFCNLRRVLNIISNNYIDSRIRRFQSFGDFSTIPGPHFALGFSEYATWTSPIRKYSDMINHRLLKSIIKKEKSIKPGEDIKIKISEQRRRNRMAERDVSDWLYTIFLQKKKYQNQKFNAEITDISRSGIRARLIENGANVFIPGTLIHPIREELNFNQESGKVFINGIMHYKISDLIQVTLSDIRLKTRSIIAKPVFEKFK</sequence>